<accession>P75072</accession>
<keyword id="KW-1185">Reference proteome</keyword>
<comment type="similarity">
    <text evidence="1">Belongs to the MG032/MG096/MG288 family.</text>
</comment>
<gene>
    <name type="ordered locus">MPN_042</name>
    <name type="ORF">B01_orf672</name>
    <name type="ORF">MP112</name>
</gene>
<name>Y042_MYCPN</name>
<sequence length="672" mass="77589">MKKLHKILLGLSLPASLAPLSGFISTDADNSQFSLKKSSTEIKGTQSIHLLNLGESLTEEIKEAQKRTPETSFASFKQKFPNKESFVKGFQPIDVYNLLSGWKDAISSFLDKVVELQKKIEEANKIFNTNIGNQIDLPEDENPNVLNVLGSYGGEGFFPTLGKNGLNLPQQIFENFTDFKVVSHKIHDFQVSLVGERDIIKNDKVRFSYAVQIPLNLELLVNNQKVTFNITVDLRTNNFSTQETFNELFNKCIGPVNWQFFSRVKVDKLHYDQTDATHLANTLLQDQFNALNLDLEKSIYDLELPRLEAEFQQKYVDPLIEKKQRQKAEWEEAERIRKEEEEKHQKELEEQQRIQAEKAKNDEQLQKPQTELKKALGGIDSFVEFFTNNDLRLKLGYTKEDNVRTRAGLFRALEVSFGNYRAWTFYITLLGWKDTTEKIFKKAKWQDIRDDEKFRKAFGLSPKATEKDVGKVTNPGYGYQGIYIKDSLRDGIAKYSDSTVSEPKNVKVSLPGTVGDNEEGKIWIASHNFRQNHEWGAGEKFKYSAYRFKFDVTVDYDVEVSAKWWTWAFRGSIPGYWRGKFKVTYSFDGVVPSWKYGHIQVRTPQYSFNKQEQKILFVPHAIQKIAAEGSNLDLINPFLKDQKLDEFEHYHPDLTKPLDLVAYLLYAITTRS</sequence>
<protein>
    <recommendedName>
        <fullName>Uncharacterized protein MPN_042</fullName>
    </recommendedName>
</protein>
<evidence type="ECO:0000305" key="1"/>
<reference key="1">
    <citation type="journal article" date="1996" name="Nucleic Acids Res.">
        <title>Complete sequence analysis of the genome of the bacterium Mycoplasma pneumoniae.</title>
        <authorList>
            <person name="Himmelreich R."/>
            <person name="Hilbert H."/>
            <person name="Plagens H."/>
            <person name="Pirkl E."/>
            <person name="Li B.-C."/>
            <person name="Herrmann R."/>
        </authorList>
    </citation>
    <scope>NUCLEOTIDE SEQUENCE [LARGE SCALE GENOMIC DNA]</scope>
    <source>
        <strain>ATCC 29342 / M129 / Subtype 1</strain>
    </source>
</reference>
<dbReference type="EMBL" id="U00089">
    <property type="protein sequence ID" value="AAB95760.1"/>
    <property type="molecule type" value="Genomic_DNA"/>
</dbReference>
<dbReference type="PIR" id="S73438">
    <property type="entry name" value="S73438"/>
</dbReference>
<dbReference type="RefSeq" id="NP_109730.1">
    <property type="nucleotide sequence ID" value="NC_000912.1"/>
</dbReference>
<dbReference type="RefSeq" id="WP_010874399.1">
    <property type="nucleotide sequence ID" value="NC_000912.1"/>
</dbReference>
<dbReference type="SMR" id="P75072"/>
<dbReference type="IntAct" id="P75072">
    <property type="interactions" value="4"/>
</dbReference>
<dbReference type="EnsemblBacteria" id="AAB95760">
    <property type="protein sequence ID" value="AAB95760"/>
    <property type="gene ID" value="MPN_042"/>
</dbReference>
<dbReference type="KEGG" id="mpn:MPN_042"/>
<dbReference type="PATRIC" id="fig|272634.6.peg.41"/>
<dbReference type="HOGENOM" id="CLU_412083_0_0_14"/>
<dbReference type="BioCyc" id="MPNE272634:G1GJ3-58-MONOMER"/>
<dbReference type="Proteomes" id="UP000000808">
    <property type="component" value="Chromosome"/>
</dbReference>
<dbReference type="InterPro" id="IPR004306">
    <property type="entry name" value="DUF237"/>
</dbReference>
<dbReference type="InterPro" id="IPR004319">
    <property type="entry name" value="DUF240"/>
</dbReference>
<dbReference type="Pfam" id="PF03072">
    <property type="entry name" value="DUF237"/>
    <property type="match status" value="1"/>
</dbReference>
<dbReference type="Pfam" id="PF03086">
    <property type="entry name" value="DUF240"/>
    <property type="match status" value="1"/>
</dbReference>
<proteinExistence type="inferred from homology"/>
<feature type="chain" id="PRO_0000215251" description="Uncharacterized protein MPN_042">
    <location>
        <begin position="1"/>
        <end position="672"/>
    </location>
</feature>
<organism>
    <name type="scientific">Mycoplasma pneumoniae (strain ATCC 29342 / M129 / Subtype 1)</name>
    <name type="common">Mycoplasmoides pneumoniae</name>
    <dbReference type="NCBI Taxonomy" id="272634"/>
    <lineage>
        <taxon>Bacteria</taxon>
        <taxon>Bacillati</taxon>
        <taxon>Mycoplasmatota</taxon>
        <taxon>Mycoplasmoidales</taxon>
        <taxon>Mycoplasmoidaceae</taxon>
        <taxon>Mycoplasmoides</taxon>
    </lineage>
</organism>